<dbReference type="EMBL" id="CP000764">
    <property type="protein sequence ID" value="ABS23293.1"/>
    <property type="molecule type" value="Genomic_DNA"/>
</dbReference>
<dbReference type="SMR" id="A7GT35"/>
<dbReference type="STRING" id="315749.Bcer98_3067"/>
<dbReference type="KEGG" id="bcy:Bcer98_3067"/>
<dbReference type="eggNOG" id="COG0267">
    <property type="taxonomic scope" value="Bacteria"/>
</dbReference>
<dbReference type="HOGENOM" id="CLU_190949_0_2_9"/>
<dbReference type="OrthoDB" id="197660at2"/>
<dbReference type="Proteomes" id="UP000002300">
    <property type="component" value="Chromosome"/>
</dbReference>
<dbReference type="GO" id="GO:0005737">
    <property type="term" value="C:cytoplasm"/>
    <property type="evidence" value="ECO:0007669"/>
    <property type="project" value="UniProtKB-ARBA"/>
</dbReference>
<dbReference type="GO" id="GO:1990904">
    <property type="term" value="C:ribonucleoprotein complex"/>
    <property type="evidence" value="ECO:0007669"/>
    <property type="project" value="UniProtKB-KW"/>
</dbReference>
<dbReference type="GO" id="GO:0005840">
    <property type="term" value="C:ribosome"/>
    <property type="evidence" value="ECO:0007669"/>
    <property type="project" value="UniProtKB-KW"/>
</dbReference>
<dbReference type="GO" id="GO:0003735">
    <property type="term" value="F:structural constituent of ribosome"/>
    <property type="evidence" value="ECO:0007669"/>
    <property type="project" value="InterPro"/>
</dbReference>
<dbReference type="GO" id="GO:0006412">
    <property type="term" value="P:translation"/>
    <property type="evidence" value="ECO:0007669"/>
    <property type="project" value="UniProtKB-UniRule"/>
</dbReference>
<dbReference type="Gene3D" id="2.20.28.120">
    <property type="entry name" value="Ribosomal protein L33"/>
    <property type="match status" value="1"/>
</dbReference>
<dbReference type="HAMAP" id="MF_00294">
    <property type="entry name" value="Ribosomal_bL33"/>
    <property type="match status" value="1"/>
</dbReference>
<dbReference type="InterPro" id="IPR001705">
    <property type="entry name" value="Ribosomal_bL33"/>
</dbReference>
<dbReference type="InterPro" id="IPR018264">
    <property type="entry name" value="Ribosomal_bL33_CS"/>
</dbReference>
<dbReference type="InterPro" id="IPR038584">
    <property type="entry name" value="Ribosomal_bL33_sf"/>
</dbReference>
<dbReference type="InterPro" id="IPR011332">
    <property type="entry name" value="Ribosomal_zn-bd"/>
</dbReference>
<dbReference type="NCBIfam" id="NF001764">
    <property type="entry name" value="PRK00504.1"/>
    <property type="match status" value="1"/>
</dbReference>
<dbReference type="NCBIfam" id="NF001860">
    <property type="entry name" value="PRK00595.1"/>
    <property type="match status" value="1"/>
</dbReference>
<dbReference type="NCBIfam" id="TIGR01023">
    <property type="entry name" value="rpmG_bact"/>
    <property type="match status" value="1"/>
</dbReference>
<dbReference type="PANTHER" id="PTHR43168">
    <property type="entry name" value="50S RIBOSOMAL PROTEIN L33, CHLOROPLASTIC"/>
    <property type="match status" value="1"/>
</dbReference>
<dbReference type="PANTHER" id="PTHR43168:SF2">
    <property type="entry name" value="LARGE RIBOSOMAL SUBUNIT PROTEIN BL33C"/>
    <property type="match status" value="1"/>
</dbReference>
<dbReference type="Pfam" id="PF00471">
    <property type="entry name" value="Ribosomal_L33"/>
    <property type="match status" value="1"/>
</dbReference>
<dbReference type="SUPFAM" id="SSF57829">
    <property type="entry name" value="Zn-binding ribosomal proteins"/>
    <property type="match status" value="1"/>
</dbReference>
<dbReference type="PROSITE" id="PS00582">
    <property type="entry name" value="RIBOSOMAL_L33"/>
    <property type="match status" value="1"/>
</dbReference>
<organism>
    <name type="scientific">Bacillus cytotoxicus (strain DSM 22905 / CIP 110041 / 391-98 / NVH 391-98)</name>
    <dbReference type="NCBI Taxonomy" id="315749"/>
    <lineage>
        <taxon>Bacteria</taxon>
        <taxon>Bacillati</taxon>
        <taxon>Bacillota</taxon>
        <taxon>Bacilli</taxon>
        <taxon>Bacillales</taxon>
        <taxon>Bacillaceae</taxon>
        <taxon>Bacillus</taxon>
        <taxon>Bacillus cereus group</taxon>
    </lineage>
</organism>
<reference key="1">
    <citation type="journal article" date="2008" name="Chem. Biol. Interact.">
        <title>Extending the Bacillus cereus group genomics to putative food-borne pathogens of different toxicity.</title>
        <authorList>
            <person name="Lapidus A."/>
            <person name="Goltsman E."/>
            <person name="Auger S."/>
            <person name="Galleron N."/>
            <person name="Segurens B."/>
            <person name="Dossat C."/>
            <person name="Land M.L."/>
            <person name="Broussolle V."/>
            <person name="Brillard J."/>
            <person name="Guinebretiere M.-H."/>
            <person name="Sanchis V."/>
            <person name="Nguen-the C."/>
            <person name="Lereclus D."/>
            <person name="Richardson P."/>
            <person name="Wincker P."/>
            <person name="Weissenbach J."/>
            <person name="Ehrlich S.D."/>
            <person name="Sorokin A."/>
        </authorList>
    </citation>
    <scope>NUCLEOTIDE SEQUENCE [LARGE SCALE GENOMIC DNA]</scope>
    <source>
        <strain>DSM 22905 / CIP 110041 / 391-98 / NVH 391-98</strain>
    </source>
</reference>
<feature type="chain" id="PRO_0000356389" description="Large ribosomal subunit protein bL33B">
    <location>
        <begin position="1"/>
        <end position="49"/>
    </location>
</feature>
<keyword id="KW-0687">Ribonucleoprotein</keyword>
<keyword id="KW-0689">Ribosomal protein</keyword>
<accession>A7GT35</accession>
<name>RL332_BACCN</name>
<comment type="similarity">
    <text evidence="1">Belongs to the bacterial ribosomal protein bL33 family.</text>
</comment>
<protein>
    <recommendedName>
        <fullName evidence="1">Large ribosomal subunit protein bL33B</fullName>
    </recommendedName>
    <alternativeName>
        <fullName evidence="1">50S ribosomal protein L33 2</fullName>
    </alternativeName>
</protein>
<gene>
    <name evidence="1" type="primary">rpmG2</name>
    <name type="ordered locus">Bcer98_3067</name>
</gene>
<proteinExistence type="inferred from homology"/>
<sequence>MRVNITLACTECGDRNYITKKNKRNNPERIELKKYCPRLKRVTLHRETK</sequence>
<evidence type="ECO:0000255" key="1">
    <source>
        <dbReference type="HAMAP-Rule" id="MF_00294"/>
    </source>
</evidence>